<accession>B8E698</accession>
<proteinExistence type="inferred from homology"/>
<evidence type="ECO:0000255" key="1">
    <source>
        <dbReference type="HAMAP-Rule" id="MF_00033"/>
    </source>
</evidence>
<reference key="1">
    <citation type="submission" date="2008-12" db="EMBL/GenBank/DDBJ databases">
        <title>Complete sequence of chromosome of Shewanella baltica OS223.</title>
        <authorList>
            <consortium name="US DOE Joint Genome Institute"/>
            <person name="Lucas S."/>
            <person name="Copeland A."/>
            <person name="Lapidus A."/>
            <person name="Glavina del Rio T."/>
            <person name="Dalin E."/>
            <person name="Tice H."/>
            <person name="Bruce D."/>
            <person name="Goodwin L."/>
            <person name="Pitluck S."/>
            <person name="Chertkov O."/>
            <person name="Meincke L."/>
            <person name="Brettin T."/>
            <person name="Detter J.C."/>
            <person name="Han C."/>
            <person name="Kuske C.R."/>
            <person name="Larimer F."/>
            <person name="Land M."/>
            <person name="Hauser L."/>
            <person name="Kyrpides N."/>
            <person name="Ovchinnikova G."/>
            <person name="Brettar I."/>
            <person name="Rodrigues J."/>
            <person name="Konstantinidis K."/>
            <person name="Tiedje J."/>
        </authorList>
    </citation>
    <scope>NUCLEOTIDE SEQUENCE [LARGE SCALE GENOMIC DNA]</scope>
    <source>
        <strain>OS223</strain>
    </source>
</reference>
<dbReference type="EC" id="2.4.1.227" evidence="1"/>
<dbReference type="EMBL" id="CP001252">
    <property type="protein sequence ID" value="ACK44961.1"/>
    <property type="molecule type" value="Genomic_DNA"/>
</dbReference>
<dbReference type="RefSeq" id="WP_006079894.1">
    <property type="nucleotide sequence ID" value="NC_011663.1"/>
</dbReference>
<dbReference type="SMR" id="B8E698"/>
<dbReference type="CAZy" id="GT28">
    <property type="family name" value="Glycosyltransferase Family 28"/>
</dbReference>
<dbReference type="KEGG" id="sbp:Sbal223_0427"/>
<dbReference type="HOGENOM" id="CLU_037404_2_0_6"/>
<dbReference type="UniPathway" id="UPA00219"/>
<dbReference type="Proteomes" id="UP000002507">
    <property type="component" value="Chromosome"/>
</dbReference>
<dbReference type="GO" id="GO:0005886">
    <property type="term" value="C:plasma membrane"/>
    <property type="evidence" value="ECO:0007669"/>
    <property type="project" value="UniProtKB-SubCell"/>
</dbReference>
<dbReference type="GO" id="GO:0051991">
    <property type="term" value="F:UDP-N-acetyl-D-glucosamine:N-acetylmuramoyl-L-alanyl-D-glutamyl-meso-2,6-diaminopimelyl-D-alanyl-D-alanine-diphosphoundecaprenol 4-beta-N-acetylglucosaminlytransferase activity"/>
    <property type="evidence" value="ECO:0007669"/>
    <property type="project" value="RHEA"/>
</dbReference>
<dbReference type="GO" id="GO:0050511">
    <property type="term" value="F:undecaprenyldiphospho-muramoylpentapeptide beta-N-acetylglucosaminyltransferase activity"/>
    <property type="evidence" value="ECO:0007669"/>
    <property type="project" value="UniProtKB-UniRule"/>
</dbReference>
<dbReference type="GO" id="GO:0005975">
    <property type="term" value="P:carbohydrate metabolic process"/>
    <property type="evidence" value="ECO:0007669"/>
    <property type="project" value="InterPro"/>
</dbReference>
<dbReference type="GO" id="GO:0051301">
    <property type="term" value="P:cell division"/>
    <property type="evidence" value="ECO:0007669"/>
    <property type="project" value="UniProtKB-KW"/>
</dbReference>
<dbReference type="GO" id="GO:0071555">
    <property type="term" value="P:cell wall organization"/>
    <property type="evidence" value="ECO:0007669"/>
    <property type="project" value="UniProtKB-KW"/>
</dbReference>
<dbReference type="GO" id="GO:0030259">
    <property type="term" value="P:lipid glycosylation"/>
    <property type="evidence" value="ECO:0007669"/>
    <property type="project" value="UniProtKB-UniRule"/>
</dbReference>
<dbReference type="GO" id="GO:0009252">
    <property type="term" value="P:peptidoglycan biosynthetic process"/>
    <property type="evidence" value="ECO:0007669"/>
    <property type="project" value="UniProtKB-UniRule"/>
</dbReference>
<dbReference type="GO" id="GO:0008360">
    <property type="term" value="P:regulation of cell shape"/>
    <property type="evidence" value="ECO:0007669"/>
    <property type="project" value="UniProtKB-KW"/>
</dbReference>
<dbReference type="CDD" id="cd03785">
    <property type="entry name" value="GT28_MurG"/>
    <property type="match status" value="1"/>
</dbReference>
<dbReference type="Gene3D" id="3.40.50.2000">
    <property type="entry name" value="Glycogen Phosphorylase B"/>
    <property type="match status" value="2"/>
</dbReference>
<dbReference type="HAMAP" id="MF_00033">
    <property type="entry name" value="MurG"/>
    <property type="match status" value="1"/>
</dbReference>
<dbReference type="InterPro" id="IPR006009">
    <property type="entry name" value="GlcNAc_MurG"/>
</dbReference>
<dbReference type="InterPro" id="IPR007235">
    <property type="entry name" value="Glyco_trans_28_C"/>
</dbReference>
<dbReference type="InterPro" id="IPR004276">
    <property type="entry name" value="GlycoTrans_28_N"/>
</dbReference>
<dbReference type="NCBIfam" id="TIGR01133">
    <property type="entry name" value="murG"/>
    <property type="match status" value="1"/>
</dbReference>
<dbReference type="PANTHER" id="PTHR21015:SF22">
    <property type="entry name" value="GLYCOSYLTRANSFERASE"/>
    <property type="match status" value="1"/>
</dbReference>
<dbReference type="PANTHER" id="PTHR21015">
    <property type="entry name" value="UDP-N-ACETYLGLUCOSAMINE--N-ACETYLMURAMYL-(PENTAPEPTIDE) PYROPHOSPHORYL-UNDECAPRENOL N-ACETYLGLUCOSAMINE TRANSFERASE 1"/>
    <property type="match status" value="1"/>
</dbReference>
<dbReference type="Pfam" id="PF04101">
    <property type="entry name" value="Glyco_tran_28_C"/>
    <property type="match status" value="1"/>
</dbReference>
<dbReference type="Pfam" id="PF03033">
    <property type="entry name" value="Glyco_transf_28"/>
    <property type="match status" value="1"/>
</dbReference>
<dbReference type="SUPFAM" id="SSF53756">
    <property type="entry name" value="UDP-Glycosyltransferase/glycogen phosphorylase"/>
    <property type="match status" value="1"/>
</dbReference>
<feature type="chain" id="PRO_1000192142" description="UDP-N-acetylglucosamine--N-acetylmuramyl-(pentapeptide) pyrophosphoryl-undecaprenol N-acetylglucosamine transferase">
    <location>
        <begin position="1"/>
        <end position="362"/>
    </location>
</feature>
<feature type="binding site" evidence="1">
    <location>
        <begin position="15"/>
        <end position="17"/>
    </location>
    <ligand>
        <name>UDP-N-acetyl-alpha-D-glucosamine</name>
        <dbReference type="ChEBI" id="CHEBI:57705"/>
    </ligand>
</feature>
<feature type="binding site" evidence="1">
    <location>
        <position position="127"/>
    </location>
    <ligand>
        <name>UDP-N-acetyl-alpha-D-glucosamine</name>
        <dbReference type="ChEBI" id="CHEBI:57705"/>
    </ligand>
</feature>
<feature type="binding site" evidence="1">
    <location>
        <position position="165"/>
    </location>
    <ligand>
        <name>UDP-N-acetyl-alpha-D-glucosamine</name>
        <dbReference type="ChEBI" id="CHEBI:57705"/>
    </ligand>
</feature>
<feature type="binding site" evidence="1">
    <location>
        <position position="191"/>
    </location>
    <ligand>
        <name>UDP-N-acetyl-alpha-D-glucosamine</name>
        <dbReference type="ChEBI" id="CHEBI:57705"/>
    </ligand>
</feature>
<feature type="binding site" evidence="1">
    <location>
        <position position="247"/>
    </location>
    <ligand>
        <name>UDP-N-acetyl-alpha-D-glucosamine</name>
        <dbReference type="ChEBI" id="CHEBI:57705"/>
    </ligand>
</feature>
<feature type="binding site" evidence="1">
    <location>
        <begin position="266"/>
        <end position="271"/>
    </location>
    <ligand>
        <name>UDP-N-acetyl-alpha-D-glucosamine</name>
        <dbReference type="ChEBI" id="CHEBI:57705"/>
    </ligand>
</feature>
<feature type="binding site" evidence="1">
    <location>
        <position position="292"/>
    </location>
    <ligand>
        <name>UDP-N-acetyl-alpha-D-glucosamine</name>
        <dbReference type="ChEBI" id="CHEBI:57705"/>
    </ligand>
</feature>
<protein>
    <recommendedName>
        <fullName evidence="1">UDP-N-acetylglucosamine--N-acetylmuramyl-(pentapeptide) pyrophosphoryl-undecaprenol N-acetylglucosamine transferase</fullName>
        <ecNumber evidence="1">2.4.1.227</ecNumber>
    </recommendedName>
    <alternativeName>
        <fullName evidence="1">Undecaprenyl-PP-MurNAc-pentapeptide-UDPGlcNAc GlcNAc transferase</fullName>
    </alternativeName>
</protein>
<name>MURG_SHEB2</name>
<keyword id="KW-0131">Cell cycle</keyword>
<keyword id="KW-0132">Cell division</keyword>
<keyword id="KW-0997">Cell inner membrane</keyword>
<keyword id="KW-1003">Cell membrane</keyword>
<keyword id="KW-0133">Cell shape</keyword>
<keyword id="KW-0961">Cell wall biogenesis/degradation</keyword>
<keyword id="KW-0328">Glycosyltransferase</keyword>
<keyword id="KW-0472">Membrane</keyword>
<keyword id="KW-0573">Peptidoglycan synthesis</keyword>
<keyword id="KW-0808">Transferase</keyword>
<sequence>MTPAGKRILVMAGGTGGHVFPALAVAKYLAQQGWQVRWLGTADRMEARLVPQYGFDIDFIDIKGVRGNGLIRKLAAPFKVVRSILQAKAVIAEFKPDVVLGMGGFASGPGGVAARLAGIPLVLHEQNAIPGMTNKLLSRIATQVLCAFKNTFTTVKAKVVGNPIRQELIALGAEPKPEADEALKVLVVGGSLGAKVFNDLMPEAVAILSQQQSVTVWHQVGKDNLAGVKAAYQQHGQDGGVNIAEFIDDMEAAYRWADVVLCRAGALTVSELAAVGLPSILVPYPHAVDDHQTRNGQVLVEAGAAFLLPQAILDVNKLAGKLQLLANDRTELARMGQRARDVAVLDATEQVAAVCISLAEKG</sequence>
<gene>
    <name evidence="1" type="primary">murG</name>
    <name type="ordered locus">Sbal223_0427</name>
</gene>
<organism>
    <name type="scientific">Shewanella baltica (strain OS223)</name>
    <dbReference type="NCBI Taxonomy" id="407976"/>
    <lineage>
        <taxon>Bacteria</taxon>
        <taxon>Pseudomonadati</taxon>
        <taxon>Pseudomonadota</taxon>
        <taxon>Gammaproteobacteria</taxon>
        <taxon>Alteromonadales</taxon>
        <taxon>Shewanellaceae</taxon>
        <taxon>Shewanella</taxon>
    </lineage>
</organism>
<comment type="function">
    <text evidence="1">Cell wall formation. Catalyzes the transfer of a GlcNAc subunit on undecaprenyl-pyrophosphoryl-MurNAc-pentapeptide (lipid intermediate I) to form undecaprenyl-pyrophosphoryl-MurNAc-(pentapeptide)GlcNAc (lipid intermediate II).</text>
</comment>
<comment type="catalytic activity">
    <reaction evidence="1">
        <text>di-trans,octa-cis-undecaprenyl diphospho-N-acetyl-alpha-D-muramoyl-L-alanyl-D-glutamyl-meso-2,6-diaminopimeloyl-D-alanyl-D-alanine + UDP-N-acetyl-alpha-D-glucosamine = di-trans,octa-cis-undecaprenyl diphospho-[N-acetyl-alpha-D-glucosaminyl-(1-&gt;4)]-N-acetyl-alpha-D-muramoyl-L-alanyl-D-glutamyl-meso-2,6-diaminopimeloyl-D-alanyl-D-alanine + UDP + H(+)</text>
        <dbReference type="Rhea" id="RHEA:31227"/>
        <dbReference type="ChEBI" id="CHEBI:15378"/>
        <dbReference type="ChEBI" id="CHEBI:57705"/>
        <dbReference type="ChEBI" id="CHEBI:58223"/>
        <dbReference type="ChEBI" id="CHEBI:61387"/>
        <dbReference type="ChEBI" id="CHEBI:61388"/>
        <dbReference type="EC" id="2.4.1.227"/>
    </reaction>
</comment>
<comment type="pathway">
    <text evidence="1">Cell wall biogenesis; peptidoglycan biosynthesis.</text>
</comment>
<comment type="subcellular location">
    <subcellularLocation>
        <location evidence="1">Cell inner membrane</location>
        <topology evidence="1">Peripheral membrane protein</topology>
        <orientation evidence="1">Cytoplasmic side</orientation>
    </subcellularLocation>
</comment>
<comment type="similarity">
    <text evidence="1">Belongs to the glycosyltransferase 28 family. MurG subfamily.</text>
</comment>